<accession>Q579E8</accession>
<sequence length="511" mass="53254">MTIILKPGSVPLETLEKIYREGLPVRIDPAFHAGIEKAAARIAEIAAGDAPVYGINTGFGKLASIRIAAGDVATLQRNLILSHCCGVGEPLSENIVRLIMALKLVSLGRGASGVRLEVITLIEAMLEKGVIPMIPEKGSVGASGDLAPLAHMTAAMIGEGEAFYRGERLSGAKALGKAGLKPVVLAAKEGLALINGTQTSTALALAGLFRAHRAARTALITGALSTDAAMGSDAPFHEEIHQLRGHKGQIDAGRALRTLLEGSAIRRSHLEGDQRVQDPYCIRCQPQVDGACLDILRQAARTLEIEANAVTDNPLVLSDGRAVSGGNFHAEPVAFAADQIALAVCEIGAISQRRIALLVDPSLSFGLPAFLARKPGLNSGLMIAEVTSAALMSENKQMAHPASVDSTPTSANQEDHVSMACHGARRLLQMTANLNAIIGIEALTGALGVELRKPLTTSAELAKVIAALRAKVATLEEDRYMADDLKAAAELVADGTLSGVISAGILPDLEA</sequence>
<protein>
    <recommendedName>
        <fullName evidence="1">Histidine ammonia-lyase</fullName>
        <shortName evidence="1">Histidase</shortName>
        <ecNumber evidence="1">4.3.1.3</ecNumber>
    </recommendedName>
</protein>
<reference key="1">
    <citation type="journal article" date="2005" name="J. Bacteriol.">
        <title>Completion of the genome sequence of Brucella abortus and comparison to the highly similar genomes of Brucella melitensis and Brucella suis.</title>
        <authorList>
            <person name="Halling S.M."/>
            <person name="Peterson-Burch B.D."/>
            <person name="Bricker B.J."/>
            <person name="Zuerner R.L."/>
            <person name="Qing Z."/>
            <person name="Li L.-L."/>
            <person name="Kapur V."/>
            <person name="Alt D.P."/>
            <person name="Olsen S.C."/>
        </authorList>
    </citation>
    <scope>NUCLEOTIDE SEQUENCE [LARGE SCALE GENOMIC DNA]</scope>
    <source>
        <strain>9-941</strain>
    </source>
</reference>
<keyword id="KW-0963">Cytoplasm</keyword>
<keyword id="KW-0369">Histidine metabolism</keyword>
<keyword id="KW-0456">Lyase</keyword>
<feature type="chain" id="PRO_0000160995" description="Histidine ammonia-lyase">
    <location>
        <begin position="1"/>
        <end position="511"/>
    </location>
</feature>
<feature type="modified residue" description="2,3-didehydroalanine (Ser)" evidence="1">
    <location>
        <position position="143"/>
    </location>
</feature>
<feature type="cross-link" description="5-imidazolinone (Ala-Gly)" evidence="1">
    <location>
        <begin position="142"/>
        <end position="144"/>
    </location>
</feature>
<name>HUTH_BRUAB</name>
<gene>
    <name evidence="1" type="primary">hutH</name>
    <name type="ordered locus">BruAb2_0303</name>
</gene>
<evidence type="ECO:0000255" key="1">
    <source>
        <dbReference type="HAMAP-Rule" id="MF_00229"/>
    </source>
</evidence>
<dbReference type="EC" id="4.3.1.3" evidence="1"/>
<dbReference type="EMBL" id="AE017224">
    <property type="protein sequence ID" value="AAX75736.1"/>
    <property type="molecule type" value="Genomic_DNA"/>
</dbReference>
<dbReference type="RefSeq" id="WP_002972121.1">
    <property type="nucleotide sequence ID" value="NC_006933.1"/>
</dbReference>
<dbReference type="SMR" id="Q579E8"/>
<dbReference type="EnsemblBacteria" id="AAX75736">
    <property type="protein sequence ID" value="AAX75736"/>
    <property type="gene ID" value="BruAb2_0303"/>
</dbReference>
<dbReference type="GeneID" id="93015751"/>
<dbReference type="KEGG" id="bmb:BruAb2_0303"/>
<dbReference type="HOGENOM" id="CLU_014801_4_0_5"/>
<dbReference type="UniPathway" id="UPA00379">
    <property type="reaction ID" value="UER00549"/>
</dbReference>
<dbReference type="Proteomes" id="UP000000540">
    <property type="component" value="Chromosome II"/>
</dbReference>
<dbReference type="GO" id="GO:0005737">
    <property type="term" value="C:cytoplasm"/>
    <property type="evidence" value="ECO:0007669"/>
    <property type="project" value="UniProtKB-SubCell"/>
</dbReference>
<dbReference type="GO" id="GO:0004397">
    <property type="term" value="F:histidine ammonia-lyase activity"/>
    <property type="evidence" value="ECO:0007669"/>
    <property type="project" value="UniProtKB-UniRule"/>
</dbReference>
<dbReference type="GO" id="GO:0019556">
    <property type="term" value="P:L-histidine catabolic process to glutamate and formamide"/>
    <property type="evidence" value="ECO:0007669"/>
    <property type="project" value="UniProtKB-UniPathway"/>
</dbReference>
<dbReference type="GO" id="GO:0019557">
    <property type="term" value="P:L-histidine catabolic process to glutamate and formate"/>
    <property type="evidence" value="ECO:0007669"/>
    <property type="project" value="UniProtKB-UniPathway"/>
</dbReference>
<dbReference type="CDD" id="cd00332">
    <property type="entry name" value="PAL-HAL"/>
    <property type="match status" value="1"/>
</dbReference>
<dbReference type="FunFam" id="1.10.275.10:FF:000005">
    <property type="entry name" value="Histidine ammonia-lyase"/>
    <property type="match status" value="1"/>
</dbReference>
<dbReference type="FunFam" id="1.20.200.10:FF:000003">
    <property type="entry name" value="Histidine ammonia-lyase"/>
    <property type="match status" value="1"/>
</dbReference>
<dbReference type="Gene3D" id="1.20.200.10">
    <property type="entry name" value="Fumarase/aspartase (Central domain)"/>
    <property type="match status" value="1"/>
</dbReference>
<dbReference type="Gene3D" id="1.10.275.10">
    <property type="entry name" value="Fumarase/aspartase (N-terminal domain)"/>
    <property type="match status" value="1"/>
</dbReference>
<dbReference type="HAMAP" id="MF_00229">
    <property type="entry name" value="His_ammonia_lyase"/>
    <property type="match status" value="1"/>
</dbReference>
<dbReference type="InterPro" id="IPR001106">
    <property type="entry name" value="Aromatic_Lyase"/>
</dbReference>
<dbReference type="InterPro" id="IPR024083">
    <property type="entry name" value="Fumarase/histidase_N"/>
</dbReference>
<dbReference type="InterPro" id="IPR005921">
    <property type="entry name" value="HutH"/>
</dbReference>
<dbReference type="InterPro" id="IPR008948">
    <property type="entry name" value="L-Aspartase-like"/>
</dbReference>
<dbReference type="InterPro" id="IPR022313">
    <property type="entry name" value="Phe/His_NH3-lyase_AS"/>
</dbReference>
<dbReference type="NCBIfam" id="TIGR01225">
    <property type="entry name" value="hutH"/>
    <property type="match status" value="1"/>
</dbReference>
<dbReference type="NCBIfam" id="NF006871">
    <property type="entry name" value="PRK09367.1"/>
    <property type="match status" value="1"/>
</dbReference>
<dbReference type="PANTHER" id="PTHR10362">
    <property type="entry name" value="HISTIDINE AMMONIA-LYASE"/>
    <property type="match status" value="1"/>
</dbReference>
<dbReference type="Pfam" id="PF00221">
    <property type="entry name" value="Lyase_aromatic"/>
    <property type="match status" value="1"/>
</dbReference>
<dbReference type="SUPFAM" id="SSF48557">
    <property type="entry name" value="L-aspartase-like"/>
    <property type="match status" value="1"/>
</dbReference>
<dbReference type="PROSITE" id="PS00488">
    <property type="entry name" value="PAL_HISTIDASE"/>
    <property type="match status" value="1"/>
</dbReference>
<organism>
    <name type="scientific">Brucella abortus biovar 1 (strain 9-941)</name>
    <dbReference type="NCBI Taxonomy" id="262698"/>
    <lineage>
        <taxon>Bacteria</taxon>
        <taxon>Pseudomonadati</taxon>
        <taxon>Pseudomonadota</taxon>
        <taxon>Alphaproteobacteria</taxon>
        <taxon>Hyphomicrobiales</taxon>
        <taxon>Brucellaceae</taxon>
        <taxon>Brucella/Ochrobactrum group</taxon>
        <taxon>Brucella</taxon>
    </lineage>
</organism>
<proteinExistence type="inferred from homology"/>
<comment type="catalytic activity">
    <reaction evidence="1">
        <text>L-histidine = trans-urocanate + NH4(+)</text>
        <dbReference type="Rhea" id="RHEA:21232"/>
        <dbReference type="ChEBI" id="CHEBI:17771"/>
        <dbReference type="ChEBI" id="CHEBI:28938"/>
        <dbReference type="ChEBI" id="CHEBI:57595"/>
        <dbReference type="EC" id="4.3.1.3"/>
    </reaction>
</comment>
<comment type="pathway">
    <text evidence="1">Amino-acid degradation; L-histidine degradation into L-glutamate; N-formimidoyl-L-glutamate from L-histidine: step 1/3.</text>
</comment>
<comment type="subcellular location">
    <subcellularLocation>
        <location evidence="1">Cytoplasm</location>
    </subcellularLocation>
</comment>
<comment type="PTM">
    <text evidence="1">Contains an active site 4-methylidene-imidazol-5-one (MIO), which is formed autocatalytically by cyclization and dehydration of residues Ala-Ser-Gly.</text>
</comment>
<comment type="similarity">
    <text evidence="1">Belongs to the PAL/histidase family.</text>
</comment>